<comment type="subcellular location">
    <subcellularLocation>
        <location evidence="3">Host membrane</location>
        <topology evidence="3">Single-pass membrane protein</topology>
    </subcellularLocation>
</comment>
<protein>
    <recommendedName>
        <fullName>Uncharacterized gene A8 protein</fullName>
    </recommendedName>
</protein>
<sequence length="683" mass="73841">MDNYTLALNCNHTTHGYAHYVYSTLSYLVFIGNAPGYPNCENCIYDITFNSTSMLNISNNYFHIANATLGAPEYPEQPVTLSVIGEESPWVAWLAVHTPDKNYTEDANTARAVMRVLDPFNISWCAVYNVQSVDPTDTQDISNCTEVSEELPVNNQKSSIHLNTYFLNSTFTVSVSLNASNISSQCSGNVSLENMTSNVHIPCPTLPLTVSVKASTDNMQTGAAVNASIDIGWLLQNLTDASLTVSSSPGNLTQKNCTTYKNISKTDRHVRDENLYVLAQIPALEGHKDSFTLTRSPILLNFSRNSSEFQLVLYDRNSSCVWANPANGTDTILVSMSCPHITATISPRGEIKVNVTGNFSRNANLSLAFLSSKGKEYAGVLLQAFEPSTRPPPGTVAPGILSTTANFETSTNKSSPTYTPTPAKLSTPPGLTNTLLLTAGEHNSGIGSTLEPLTTVSVQVLQTPSSPTRDTSTLVIKLTTVPQDHKTVSPSLVTPGRTSTLPIVSMTHFSREGSSPKPQTTAAKTSSEASLPPLLTTTPTPTNTEKSQSTFASSTVSVDTTFTGDDVNTVGTMSPSITQTLPITPTSGRQYIVVGCCTLNRRSGNLFFFFLFVAAHRESGHNTSMPNPHHNSVKPEDHPHHPEGDHPDADHHERFQIWLLPIAGTIFALVALVIVNIALRMTE</sequence>
<feature type="chain" id="PRO_0000405727" description="Uncharacterized gene A8 protein">
    <location>
        <begin position="1"/>
        <end position="683"/>
    </location>
</feature>
<feature type="transmembrane region" description="Helical" evidence="1">
    <location>
        <begin position="657"/>
        <end position="677"/>
    </location>
</feature>
<feature type="region of interest" description="Disordered" evidence="2">
    <location>
        <begin position="407"/>
        <end position="427"/>
    </location>
</feature>
<feature type="region of interest" description="Disordered" evidence="2">
    <location>
        <begin position="509"/>
        <end position="556"/>
    </location>
</feature>
<feature type="region of interest" description="Disordered" evidence="2">
    <location>
        <begin position="621"/>
        <end position="648"/>
    </location>
</feature>
<feature type="compositionally biased region" description="Polar residues" evidence="2">
    <location>
        <begin position="407"/>
        <end position="420"/>
    </location>
</feature>
<feature type="compositionally biased region" description="Polar residues" evidence="2">
    <location>
        <begin position="512"/>
        <end position="529"/>
    </location>
</feature>
<feature type="compositionally biased region" description="Low complexity" evidence="2">
    <location>
        <begin position="531"/>
        <end position="542"/>
    </location>
</feature>
<feature type="compositionally biased region" description="Polar residues" evidence="2">
    <location>
        <begin position="543"/>
        <end position="556"/>
    </location>
</feature>
<feature type="compositionally biased region" description="Polar residues" evidence="2">
    <location>
        <begin position="621"/>
        <end position="630"/>
    </location>
</feature>
<feature type="compositionally biased region" description="Basic and acidic residues" evidence="2">
    <location>
        <begin position="633"/>
        <end position="648"/>
    </location>
</feature>
<proteinExistence type="predicted"/>
<reference key="1">
    <citation type="journal article" date="1997" name="J. Virol.">
        <title>Primary structure of the alcelaphine herpesvirus 1 genome.</title>
        <authorList>
            <person name="Ensser A."/>
            <person name="Pflanz R."/>
            <person name="Fleckenstein B."/>
        </authorList>
    </citation>
    <scope>NUCLEOTIDE SEQUENCE [LARGE SCALE GENOMIC DNA]</scope>
</reference>
<organism>
    <name type="scientific">Alcelaphine herpesvirus 1 (strain C500)</name>
    <name type="common">AlHV-1</name>
    <name type="synonym">Malignant catarrhal fever virus</name>
    <dbReference type="NCBI Taxonomy" id="654901"/>
    <lineage>
        <taxon>Viruses</taxon>
        <taxon>Duplodnaviria</taxon>
        <taxon>Heunggongvirae</taxon>
        <taxon>Peploviricota</taxon>
        <taxon>Herviviricetes</taxon>
        <taxon>Herpesvirales</taxon>
        <taxon>Orthoherpesviridae</taxon>
        <taxon>Gammaherpesvirinae</taxon>
        <taxon>Macavirus</taxon>
        <taxon>Macavirus alcelaphinegamma1</taxon>
    </lineage>
</organism>
<organismHost>
    <name type="scientific">Connochaetes taurinus</name>
    <name type="common">Blue wildebeest</name>
    <dbReference type="NCBI Taxonomy" id="9927"/>
</organismHost>
<name>VGA8_ALHV1</name>
<dbReference type="EMBL" id="AF005370">
    <property type="protein sequence ID" value="AAC58098.1"/>
    <property type="molecule type" value="Genomic_DNA"/>
</dbReference>
<dbReference type="PIR" id="T03146">
    <property type="entry name" value="T03146"/>
</dbReference>
<dbReference type="RefSeq" id="NP_065550.1">
    <property type="nucleotide sequence ID" value="NC_002531.1"/>
</dbReference>
<dbReference type="SMR" id="O36401"/>
<dbReference type="KEGG" id="vg:911768"/>
<dbReference type="Proteomes" id="UP000000941">
    <property type="component" value="Segment"/>
</dbReference>
<dbReference type="GO" id="GO:0033644">
    <property type="term" value="C:host cell membrane"/>
    <property type="evidence" value="ECO:0007669"/>
    <property type="project" value="UniProtKB-SubCell"/>
</dbReference>
<dbReference type="GO" id="GO:0016020">
    <property type="term" value="C:membrane"/>
    <property type="evidence" value="ECO:0007669"/>
    <property type="project" value="UniProtKB-KW"/>
</dbReference>
<evidence type="ECO:0000255" key="1"/>
<evidence type="ECO:0000256" key="2">
    <source>
        <dbReference type="SAM" id="MobiDB-lite"/>
    </source>
</evidence>
<evidence type="ECO:0000305" key="3"/>
<keyword id="KW-1043">Host membrane</keyword>
<keyword id="KW-0472">Membrane</keyword>
<keyword id="KW-1185">Reference proteome</keyword>
<keyword id="KW-0812">Transmembrane</keyword>
<keyword id="KW-1133">Transmembrane helix</keyword>
<accession>O36401</accession>
<gene>
    <name type="primary">A8</name>
</gene>